<dbReference type="EMBL" id="AM180088">
    <property type="protein sequence ID" value="CAJ52933.1"/>
    <property type="molecule type" value="Genomic_DNA"/>
</dbReference>
<dbReference type="RefSeq" id="WP_011572046.1">
    <property type="nucleotide sequence ID" value="NC_008212.1"/>
</dbReference>
<dbReference type="SMR" id="Q18GG5"/>
<dbReference type="STRING" id="362976.HQ_2826A"/>
<dbReference type="GeneID" id="4194628"/>
<dbReference type="KEGG" id="hwa:HQ_2826A"/>
<dbReference type="eggNOG" id="arCOG04090">
    <property type="taxonomic scope" value="Archaea"/>
</dbReference>
<dbReference type="HOGENOM" id="CLU_065464_0_0_2"/>
<dbReference type="Proteomes" id="UP000001975">
    <property type="component" value="Chromosome"/>
</dbReference>
<dbReference type="GO" id="GO:0022625">
    <property type="term" value="C:cytosolic large ribosomal subunit"/>
    <property type="evidence" value="ECO:0007669"/>
    <property type="project" value="TreeGrafter"/>
</dbReference>
<dbReference type="GO" id="GO:0019843">
    <property type="term" value="F:rRNA binding"/>
    <property type="evidence" value="ECO:0007669"/>
    <property type="project" value="UniProtKB-UniRule"/>
</dbReference>
<dbReference type="GO" id="GO:0003735">
    <property type="term" value="F:structural constituent of ribosome"/>
    <property type="evidence" value="ECO:0007669"/>
    <property type="project" value="InterPro"/>
</dbReference>
<dbReference type="GO" id="GO:0002181">
    <property type="term" value="P:cytoplasmic translation"/>
    <property type="evidence" value="ECO:0007669"/>
    <property type="project" value="TreeGrafter"/>
</dbReference>
<dbReference type="FunFam" id="3.90.930.12:FF:000008">
    <property type="entry name" value="50S ribosomal protein L6"/>
    <property type="match status" value="1"/>
</dbReference>
<dbReference type="Gene3D" id="3.90.930.12">
    <property type="entry name" value="Ribosomal protein L6, alpha-beta domain"/>
    <property type="match status" value="2"/>
</dbReference>
<dbReference type="HAMAP" id="MF_01365_A">
    <property type="entry name" value="Ribosomal_uL6_A"/>
    <property type="match status" value="1"/>
</dbReference>
<dbReference type="InterPro" id="IPR000702">
    <property type="entry name" value="Ribosomal_uL6-like"/>
</dbReference>
<dbReference type="InterPro" id="IPR036789">
    <property type="entry name" value="Ribosomal_uL6-like_a/b-dom_sf"/>
</dbReference>
<dbReference type="InterPro" id="IPR020040">
    <property type="entry name" value="Ribosomal_uL6_a/b-dom"/>
</dbReference>
<dbReference type="InterPro" id="IPR019907">
    <property type="entry name" value="Ribosomal_uL6_arc"/>
</dbReference>
<dbReference type="InterPro" id="IPR002359">
    <property type="entry name" value="Ribosomal_uL6_CS2"/>
</dbReference>
<dbReference type="NCBIfam" id="NF004037">
    <property type="entry name" value="PRK05518.1"/>
    <property type="match status" value="1"/>
</dbReference>
<dbReference type="NCBIfam" id="TIGR03653">
    <property type="entry name" value="uL6_arch"/>
    <property type="match status" value="1"/>
</dbReference>
<dbReference type="PANTHER" id="PTHR11655:SF16">
    <property type="entry name" value="60S RIBOSOMAL PROTEIN L9"/>
    <property type="match status" value="1"/>
</dbReference>
<dbReference type="PANTHER" id="PTHR11655">
    <property type="entry name" value="60S/50S RIBOSOMAL PROTEIN L6/L9"/>
    <property type="match status" value="1"/>
</dbReference>
<dbReference type="Pfam" id="PF00347">
    <property type="entry name" value="Ribosomal_L6"/>
    <property type="match status" value="2"/>
</dbReference>
<dbReference type="PIRSF" id="PIRSF002162">
    <property type="entry name" value="Ribosomal_L6"/>
    <property type="match status" value="1"/>
</dbReference>
<dbReference type="SUPFAM" id="SSF56053">
    <property type="entry name" value="Ribosomal protein L6"/>
    <property type="match status" value="2"/>
</dbReference>
<dbReference type="PROSITE" id="PS00700">
    <property type="entry name" value="RIBOSOMAL_L6_2"/>
    <property type="match status" value="1"/>
</dbReference>
<proteinExistence type="inferred from homology"/>
<name>RL6_HALWD</name>
<gene>
    <name evidence="1" type="primary">rpl6</name>
    <name type="ordered locus">HQ_2826A</name>
</gene>
<accession>Q18GG5</accession>
<feature type="chain" id="PRO_0000260983" description="Large ribosomal subunit protein uL6">
    <location>
        <begin position="1"/>
        <end position="182"/>
    </location>
</feature>
<evidence type="ECO:0000255" key="1">
    <source>
        <dbReference type="HAMAP-Rule" id="MF_01365"/>
    </source>
</evidence>
<evidence type="ECO:0000305" key="2"/>
<keyword id="KW-1185">Reference proteome</keyword>
<keyword id="KW-0687">Ribonucleoprotein</keyword>
<keyword id="KW-0689">Ribosomal protein</keyword>
<keyword id="KW-0694">RNA-binding</keyword>
<keyword id="KW-0699">rRNA-binding</keyword>
<reference key="1">
    <citation type="journal article" date="2006" name="BMC Genomics">
        <title>The genome of the square archaeon Haloquadratum walsbyi: life at the limits of water activity.</title>
        <authorList>
            <person name="Bolhuis H."/>
            <person name="Palm P."/>
            <person name="Wende A."/>
            <person name="Falb M."/>
            <person name="Rampp M."/>
            <person name="Rodriguez-Valera F."/>
            <person name="Pfeiffer F."/>
            <person name="Oesterhelt D."/>
        </authorList>
    </citation>
    <scope>NUCLEOTIDE SEQUENCE [LARGE SCALE GENOMIC DNA]</scope>
    <source>
        <strain>DSM 16790 / HBSQ001</strain>
    </source>
</reference>
<organism>
    <name type="scientific">Haloquadratum walsbyi (strain DSM 16790 / HBSQ001)</name>
    <dbReference type="NCBI Taxonomy" id="362976"/>
    <lineage>
        <taxon>Archaea</taxon>
        <taxon>Methanobacteriati</taxon>
        <taxon>Methanobacteriota</taxon>
        <taxon>Stenosarchaea group</taxon>
        <taxon>Halobacteria</taxon>
        <taxon>Halobacteriales</taxon>
        <taxon>Haloferacaceae</taxon>
        <taxon>Haloquadratum</taxon>
    </lineage>
</organism>
<sequence>MTRTAIEIPENVSAEVSNLALTVEGPNGSVTRTLWYPSVTVSVDEDADADAVVIETDETDAKTSATVGTFESHVSNMIHGVTDGWSYEMEVYYAHFPMQVSVEGDEVIIENFLGEKASRRTPIRGDTNVQIDGEMVTLTGPSKEDVGQTAADIEQLTRVTDKDTRIFQDGVYITQKPQQGGA</sequence>
<comment type="function">
    <text evidence="1">This protein binds to the 23S rRNA, and is important in its secondary structure. It is located near the subunit interface in the base of the L7/L12 stalk, and near the tRNA binding site of the peptidyltransferase center.</text>
</comment>
<comment type="subunit">
    <text evidence="1">Part of the 50S ribosomal subunit.</text>
</comment>
<comment type="similarity">
    <text evidence="1">Belongs to the universal ribosomal protein uL6 family.</text>
</comment>
<protein>
    <recommendedName>
        <fullName evidence="1">Large ribosomal subunit protein uL6</fullName>
    </recommendedName>
    <alternativeName>
        <fullName evidence="2">50S ribosomal protein L6</fullName>
    </alternativeName>
</protein>